<feature type="initiator methionine" description="Removed" evidence="2">
    <location>
        <position position="1"/>
    </location>
</feature>
<feature type="chain" id="PRO_0000220921" description="Proteasome inhibitor PI31 subunit">
    <location>
        <begin position="2"/>
        <end position="271"/>
    </location>
</feature>
<feature type="region of interest" description="Important for homodimerization and interaction with FBXO7" evidence="1">
    <location>
        <begin position="2"/>
        <end position="150"/>
    </location>
</feature>
<feature type="region of interest" description="Disordered" evidence="3">
    <location>
        <begin position="226"/>
        <end position="271"/>
    </location>
</feature>
<feature type="compositionally biased region" description="Pro residues" evidence="3">
    <location>
        <begin position="255"/>
        <end position="265"/>
    </location>
</feature>
<feature type="modified residue" description="N-acetylalanine" evidence="2">
    <location>
        <position position="2"/>
    </location>
</feature>
<feature type="modified residue" description="Phosphoserine" evidence="5">
    <location>
        <position position="153"/>
    </location>
</feature>
<feature type="modified residue" description="Phosphoserine" evidence="5">
    <location>
        <position position="189"/>
    </location>
</feature>
<feature type="modified residue" description="Omega-N-methylarginine" evidence="6">
    <location>
        <position position="205"/>
    </location>
</feature>
<feature type="modified residue" description="Asymmetric dimethylarginine" evidence="6">
    <location>
        <position position="219"/>
    </location>
</feature>
<feature type="modified residue" description="Omega-N-methylarginine" evidence="6">
    <location>
        <position position="231"/>
    </location>
</feature>
<feature type="modified residue" description="Phosphoserine" evidence="2">
    <location>
        <position position="252"/>
    </location>
</feature>
<feature type="sequence conflict" description="In Ref. 1; BAC27368." evidence="4" ref="1">
    <original>L</original>
    <variation>H</variation>
    <location>
        <position position="78"/>
    </location>
</feature>
<dbReference type="EMBL" id="AK031363">
    <property type="protein sequence ID" value="BAC27368.1"/>
    <property type="molecule type" value="mRNA"/>
</dbReference>
<dbReference type="EMBL" id="AK045891">
    <property type="protein sequence ID" value="BAC32522.1"/>
    <property type="molecule type" value="mRNA"/>
</dbReference>
<dbReference type="EMBL" id="AK053924">
    <property type="protein sequence ID" value="BAC35596.1"/>
    <property type="molecule type" value="mRNA"/>
</dbReference>
<dbReference type="EMBL" id="AK078867">
    <property type="protein sequence ID" value="BAC37430.1"/>
    <property type="molecule type" value="mRNA"/>
</dbReference>
<dbReference type="CCDS" id="CCDS16872.1"/>
<dbReference type="RefSeq" id="NP_997611.1">
    <property type="nucleotide sequence ID" value="NM_212446.2"/>
</dbReference>
<dbReference type="SMR" id="Q8BHL8"/>
<dbReference type="BioGRID" id="230764">
    <property type="interactions" value="21"/>
</dbReference>
<dbReference type="FunCoup" id="Q8BHL8">
    <property type="interactions" value="3995"/>
</dbReference>
<dbReference type="STRING" id="10090.ENSMUSP00000041184"/>
<dbReference type="iPTMnet" id="Q8BHL8"/>
<dbReference type="PhosphoSitePlus" id="Q8BHL8"/>
<dbReference type="REPRODUCTION-2DPAGE" id="Q8BHL8"/>
<dbReference type="jPOST" id="Q8BHL8"/>
<dbReference type="PaxDb" id="10090-ENSMUSP00000041184"/>
<dbReference type="ProteomicsDB" id="291708"/>
<dbReference type="Pumba" id="Q8BHL8"/>
<dbReference type="Antibodypedia" id="23029">
    <property type="antibodies" value="281 antibodies from 35 providers"/>
</dbReference>
<dbReference type="DNASU" id="228769"/>
<dbReference type="Ensembl" id="ENSMUST00000042452.11">
    <property type="protein sequence ID" value="ENSMUSP00000041184.5"/>
    <property type="gene ID" value="ENSMUSG00000032869.16"/>
</dbReference>
<dbReference type="Ensembl" id="ENSMUST00000109869.2">
    <property type="protein sequence ID" value="ENSMUSP00000105495.2"/>
    <property type="gene ID" value="ENSMUSG00000032869.16"/>
</dbReference>
<dbReference type="GeneID" id="228769"/>
<dbReference type="KEGG" id="mmu:228769"/>
<dbReference type="UCSC" id="uc008nek.2">
    <property type="organism name" value="mouse"/>
</dbReference>
<dbReference type="AGR" id="MGI:1346072"/>
<dbReference type="CTD" id="9491"/>
<dbReference type="MGI" id="MGI:1346072">
    <property type="gene designation" value="Psmf1"/>
</dbReference>
<dbReference type="VEuPathDB" id="HostDB:ENSMUSG00000032869"/>
<dbReference type="eggNOG" id="KOG4761">
    <property type="taxonomic scope" value="Eukaryota"/>
</dbReference>
<dbReference type="GeneTree" id="ENSGT00390000012257"/>
<dbReference type="HOGENOM" id="CLU_090116_0_0_1"/>
<dbReference type="InParanoid" id="Q8BHL8"/>
<dbReference type="OMA" id="PFGFPDI"/>
<dbReference type="OrthoDB" id="68090at2759"/>
<dbReference type="PhylomeDB" id="Q8BHL8"/>
<dbReference type="TreeFam" id="TF106238"/>
<dbReference type="BioGRID-ORCS" id="228769">
    <property type="hits" value="4 hits in 60 CRISPR screens"/>
</dbReference>
<dbReference type="PRO" id="PR:Q8BHL8"/>
<dbReference type="Proteomes" id="UP000000589">
    <property type="component" value="Chromosome 2"/>
</dbReference>
<dbReference type="RNAct" id="Q8BHL8">
    <property type="molecule type" value="protein"/>
</dbReference>
<dbReference type="Bgee" id="ENSMUSG00000032869">
    <property type="expression patterns" value="Expressed in seminiferous tubule of testis and 259 other cell types or tissues"/>
</dbReference>
<dbReference type="ExpressionAtlas" id="Q8BHL8">
    <property type="expression patterns" value="baseline and differential"/>
</dbReference>
<dbReference type="GO" id="GO:0005829">
    <property type="term" value="C:cytosol"/>
    <property type="evidence" value="ECO:0000250"/>
    <property type="project" value="UniProtKB"/>
</dbReference>
<dbReference type="GO" id="GO:0005783">
    <property type="term" value="C:endoplasmic reticulum"/>
    <property type="evidence" value="ECO:0000250"/>
    <property type="project" value="UniProtKB"/>
</dbReference>
<dbReference type="GO" id="GO:0048471">
    <property type="term" value="C:perinuclear region of cytoplasm"/>
    <property type="evidence" value="ECO:0007669"/>
    <property type="project" value="Ensembl"/>
</dbReference>
<dbReference type="GO" id="GO:0000502">
    <property type="term" value="C:proteasome complex"/>
    <property type="evidence" value="ECO:0007669"/>
    <property type="project" value="UniProtKB-KW"/>
</dbReference>
<dbReference type="GO" id="GO:0004866">
    <property type="term" value="F:endopeptidase inhibitor activity"/>
    <property type="evidence" value="ECO:0007669"/>
    <property type="project" value="InterPro"/>
</dbReference>
<dbReference type="GO" id="GO:0070628">
    <property type="term" value="F:proteasome binding"/>
    <property type="evidence" value="ECO:0000250"/>
    <property type="project" value="UniProtKB"/>
</dbReference>
<dbReference type="GO" id="GO:0046982">
    <property type="term" value="F:protein heterodimerization activity"/>
    <property type="evidence" value="ECO:0007669"/>
    <property type="project" value="Ensembl"/>
</dbReference>
<dbReference type="GO" id="GO:0042803">
    <property type="term" value="F:protein homodimerization activity"/>
    <property type="evidence" value="ECO:0007669"/>
    <property type="project" value="Ensembl"/>
</dbReference>
<dbReference type="GO" id="GO:1901799">
    <property type="term" value="P:negative regulation of proteasomal protein catabolic process"/>
    <property type="evidence" value="ECO:0000250"/>
    <property type="project" value="UniProtKB"/>
</dbReference>
<dbReference type="GO" id="GO:0043161">
    <property type="term" value="P:proteasome-mediated ubiquitin-dependent protein catabolic process"/>
    <property type="evidence" value="ECO:0007669"/>
    <property type="project" value="InterPro"/>
</dbReference>
<dbReference type="GO" id="GO:0006511">
    <property type="term" value="P:ubiquitin-dependent protein catabolic process"/>
    <property type="evidence" value="ECO:0000250"/>
    <property type="project" value="UniProtKB"/>
</dbReference>
<dbReference type="FunFam" id="3.40.1000.30:FF:000002">
    <property type="entry name" value="Proteasome inhibitor PI31 subunit"/>
    <property type="match status" value="1"/>
</dbReference>
<dbReference type="Gene3D" id="3.40.1000.30">
    <property type="match status" value="1"/>
</dbReference>
<dbReference type="InterPro" id="IPR045128">
    <property type="entry name" value="PI31-like"/>
</dbReference>
<dbReference type="InterPro" id="IPR013886">
    <property type="entry name" value="PI31_Prot_C"/>
</dbReference>
<dbReference type="InterPro" id="IPR021625">
    <property type="entry name" value="PI31_Prot_N"/>
</dbReference>
<dbReference type="PANTHER" id="PTHR13266">
    <property type="entry name" value="PROTEASOME INHIBITOR"/>
    <property type="match status" value="1"/>
</dbReference>
<dbReference type="PANTHER" id="PTHR13266:SF1">
    <property type="entry name" value="PROTEASOME INHIBITOR PI31 SUBUNIT"/>
    <property type="match status" value="1"/>
</dbReference>
<dbReference type="Pfam" id="PF08577">
    <property type="entry name" value="PI31_Prot_C"/>
    <property type="match status" value="1"/>
</dbReference>
<dbReference type="Pfam" id="PF11566">
    <property type="entry name" value="PI31_Prot_N"/>
    <property type="match status" value="1"/>
</dbReference>
<reference key="1">
    <citation type="journal article" date="2005" name="Science">
        <title>The transcriptional landscape of the mammalian genome.</title>
        <authorList>
            <person name="Carninci P."/>
            <person name="Kasukawa T."/>
            <person name="Katayama S."/>
            <person name="Gough J."/>
            <person name="Frith M.C."/>
            <person name="Maeda N."/>
            <person name="Oyama R."/>
            <person name="Ravasi T."/>
            <person name="Lenhard B."/>
            <person name="Wells C."/>
            <person name="Kodzius R."/>
            <person name="Shimokawa K."/>
            <person name="Bajic V.B."/>
            <person name="Brenner S.E."/>
            <person name="Batalov S."/>
            <person name="Forrest A.R."/>
            <person name="Zavolan M."/>
            <person name="Davis M.J."/>
            <person name="Wilming L.G."/>
            <person name="Aidinis V."/>
            <person name="Allen J.E."/>
            <person name="Ambesi-Impiombato A."/>
            <person name="Apweiler R."/>
            <person name="Aturaliya R.N."/>
            <person name="Bailey T.L."/>
            <person name="Bansal M."/>
            <person name="Baxter L."/>
            <person name="Beisel K.W."/>
            <person name="Bersano T."/>
            <person name="Bono H."/>
            <person name="Chalk A.M."/>
            <person name="Chiu K.P."/>
            <person name="Choudhary V."/>
            <person name="Christoffels A."/>
            <person name="Clutterbuck D.R."/>
            <person name="Crowe M.L."/>
            <person name="Dalla E."/>
            <person name="Dalrymple B.P."/>
            <person name="de Bono B."/>
            <person name="Della Gatta G."/>
            <person name="di Bernardo D."/>
            <person name="Down T."/>
            <person name="Engstrom P."/>
            <person name="Fagiolini M."/>
            <person name="Faulkner G."/>
            <person name="Fletcher C.F."/>
            <person name="Fukushima T."/>
            <person name="Furuno M."/>
            <person name="Futaki S."/>
            <person name="Gariboldi M."/>
            <person name="Georgii-Hemming P."/>
            <person name="Gingeras T.R."/>
            <person name="Gojobori T."/>
            <person name="Green R.E."/>
            <person name="Gustincich S."/>
            <person name="Harbers M."/>
            <person name="Hayashi Y."/>
            <person name="Hensch T.K."/>
            <person name="Hirokawa N."/>
            <person name="Hill D."/>
            <person name="Huminiecki L."/>
            <person name="Iacono M."/>
            <person name="Ikeo K."/>
            <person name="Iwama A."/>
            <person name="Ishikawa T."/>
            <person name="Jakt M."/>
            <person name="Kanapin A."/>
            <person name="Katoh M."/>
            <person name="Kawasawa Y."/>
            <person name="Kelso J."/>
            <person name="Kitamura H."/>
            <person name="Kitano H."/>
            <person name="Kollias G."/>
            <person name="Krishnan S.P."/>
            <person name="Kruger A."/>
            <person name="Kummerfeld S.K."/>
            <person name="Kurochkin I.V."/>
            <person name="Lareau L.F."/>
            <person name="Lazarevic D."/>
            <person name="Lipovich L."/>
            <person name="Liu J."/>
            <person name="Liuni S."/>
            <person name="McWilliam S."/>
            <person name="Madan Babu M."/>
            <person name="Madera M."/>
            <person name="Marchionni L."/>
            <person name="Matsuda H."/>
            <person name="Matsuzawa S."/>
            <person name="Miki H."/>
            <person name="Mignone F."/>
            <person name="Miyake S."/>
            <person name="Morris K."/>
            <person name="Mottagui-Tabar S."/>
            <person name="Mulder N."/>
            <person name="Nakano N."/>
            <person name="Nakauchi H."/>
            <person name="Ng P."/>
            <person name="Nilsson R."/>
            <person name="Nishiguchi S."/>
            <person name="Nishikawa S."/>
            <person name="Nori F."/>
            <person name="Ohara O."/>
            <person name="Okazaki Y."/>
            <person name="Orlando V."/>
            <person name="Pang K.C."/>
            <person name="Pavan W.J."/>
            <person name="Pavesi G."/>
            <person name="Pesole G."/>
            <person name="Petrovsky N."/>
            <person name="Piazza S."/>
            <person name="Reed J."/>
            <person name="Reid J.F."/>
            <person name="Ring B.Z."/>
            <person name="Ringwald M."/>
            <person name="Rost B."/>
            <person name="Ruan Y."/>
            <person name="Salzberg S.L."/>
            <person name="Sandelin A."/>
            <person name="Schneider C."/>
            <person name="Schoenbach C."/>
            <person name="Sekiguchi K."/>
            <person name="Semple C.A."/>
            <person name="Seno S."/>
            <person name="Sessa L."/>
            <person name="Sheng Y."/>
            <person name="Shibata Y."/>
            <person name="Shimada H."/>
            <person name="Shimada K."/>
            <person name="Silva D."/>
            <person name="Sinclair B."/>
            <person name="Sperling S."/>
            <person name="Stupka E."/>
            <person name="Sugiura K."/>
            <person name="Sultana R."/>
            <person name="Takenaka Y."/>
            <person name="Taki K."/>
            <person name="Tammoja K."/>
            <person name="Tan S.L."/>
            <person name="Tang S."/>
            <person name="Taylor M.S."/>
            <person name="Tegner J."/>
            <person name="Teichmann S.A."/>
            <person name="Ueda H.R."/>
            <person name="van Nimwegen E."/>
            <person name="Verardo R."/>
            <person name="Wei C.L."/>
            <person name="Yagi K."/>
            <person name="Yamanishi H."/>
            <person name="Zabarovsky E."/>
            <person name="Zhu S."/>
            <person name="Zimmer A."/>
            <person name="Hide W."/>
            <person name="Bult C."/>
            <person name="Grimmond S.M."/>
            <person name="Teasdale R.D."/>
            <person name="Liu E.T."/>
            <person name="Brusic V."/>
            <person name="Quackenbush J."/>
            <person name="Wahlestedt C."/>
            <person name="Mattick J.S."/>
            <person name="Hume D.A."/>
            <person name="Kai C."/>
            <person name="Sasaki D."/>
            <person name="Tomaru Y."/>
            <person name="Fukuda S."/>
            <person name="Kanamori-Katayama M."/>
            <person name="Suzuki M."/>
            <person name="Aoki J."/>
            <person name="Arakawa T."/>
            <person name="Iida J."/>
            <person name="Imamura K."/>
            <person name="Itoh M."/>
            <person name="Kato T."/>
            <person name="Kawaji H."/>
            <person name="Kawagashira N."/>
            <person name="Kawashima T."/>
            <person name="Kojima M."/>
            <person name="Kondo S."/>
            <person name="Konno H."/>
            <person name="Nakano K."/>
            <person name="Ninomiya N."/>
            <person name="Nishio T."/>
            <person name="Okada M."/>
            <person name="Plessy C."/>
            <person name="Shibata K."/>
            <person name="Shiraki T."/>
            <person name="Suzuki S."/>
            <person name="Tagami M."/>
            <person name="Waki K."/>
            <person name="Watahiki A."/>
            <person name="Okamura-Oho Y."/>
            <person name="Suzuki H."/>
            <person name="Kawai J."/>
            <person name="Hayashizaki Y."/>
        </authorList>
    </citation>
    <scope>NUCLEOTIDE SEQUENCE [LARGE SCALE MRNA]</scope>
    <source>
        <strain>C57BL/6J</strain>
        <tissue>Colon</tissue>
        <tissue>Corpora quadrigemina</tissue>
        <tissue>Oviduct</tissue>
        <tissue>Testis</tissue>
    </source>
</reference>
<reference key="2">
    <citation type="journal article" date="2010" name="Cell">
        <title>A tissue-specific atlas of mouse protein phosphorylation and expression.</title>
        <authorList>
            <person name="Huttlin E.L."/>
            <person name="Jedrychowski M.P."/>
            <person name="Elias J.E."/>
            <person name="Goswami T."/>
            <person name="Rad R."/>
            <person name="Beausoleil S.A."/>
            <person name="Villen J."/>
            <person name="Haas W."/>
            <person name="Sowa M.E."/>
            <person name="Gygi S.P."/>
        </authorList>
    </citation>
    <scope>PHOSPHORYLATION [LARGE SCALE ANALYSIS] AT SER-153 AND SER-189</scope>
    <scope>IDENTIFICATION BY MASS SPECTROMETRY [LARGE SCALE ANALYSIS]</scope>
    <source>
        <tissue>Brain</tissue>
        <tissue>Brown adipose tissue</tissue>
        <tissue>Heart</tissue>
        <tissue>Kidney</tissue>
        <tissue>Liver</tissue>
        <tissue>Lung</tissue>
        <tissue>Pancreas</tissue>
        <tissue>Spleen</tissue>
        <tissue>Testis</tissue>
    </source>
</reference>
<reference key="3">
    <citation type="journal article" date="2014" name="Mol. Cell. Proteomics">
        <title>Immunoaffinity enrichment and mass spectrometry analysis of protein methylation.</title>
        <authorList>
            <person name="Guo A."/>
            <person name="Gu H."/>
            <person name="Zhou J."/>
            <person name="Mulhern D."/>
            <person name="Wang Y."/>
            <person name="Lee K.A."/>
            <person name="Yang V."/>
            <person name="Aguiar M."/>
            <person name="Kornhauser J."/>
            <person name="Jia X."/>
            <person name="Ren J."/>
            <person name="Beausoleil S.A."/>
            <person name="Silva J.C."/>
            <person name="Vemulapalli V."/>
            <person name="Bedford M.T."/>
            <person name="Comb M.J."/>
        </authorList>
    </citation>
    <scope>METHYLATION [LARGE SCALE ANALYSIS] AT ARG-205; ARG-219 AND ARG-231</scope>
    <scope>IDENTIFICATION BY MASS SPECTROMETRY [LARGE SCALE ANALYSIS]</scope>
    <source>
        <tissue>Brain</tissue>
        <tissue>Embryo</tissue>
    </source>
</reference>
<name>PSMF1_MOUSE</name>
<proteinExistence type="evidence at protein level"/>
<keyword id="KW-0007">Acetylation</keyword>
<keyword id="KW-0963">Cytoplasm</keyword>
<keyword id="KW-0256">Endoplasmic reticulum</keyword>
<keyword id="KW-0488">Methylation</keyword>
<keyword id="KW-0597">Phosphoprotein</keyword>
<keyword id="KW-0647">Proteasome</keyword>
<keyword id="KW-1185">Reference proteome</keyword>
<protein>
    <recommendedName>
        <fullName>Proteasome inhibitor PI31 subunit</fullName>
    </recommendedName>
</protein>
<accession>Q8BHL8</accession>
<accession>Q8C0G9</accession>
<gene>
    <name type="primary">Psmf1</name>
</gene>
<organism>
    <name type="scientific">Mus musculus</name>
    <name type="common">Mouse</name>
    <dbReference type="NCBI Taxonomy" id="10090"/>
    <lineage>
        <taxon>Eukaryota</taxon>
        <taxon>Metazoa</taxon>
        <taxon>Chordata</taxon>
        <taxon>Craniata</taxon>
        <taxon>Vertebrata</taxon>
        <taxon>Euteleostomi</taxon>
        <taxon>Mammalia</taxon>
        <taxon>Eutheria</taxon>
        <taxon>Euarchontoglires</taxon>
        <taxon>Glires</taxon>
        <taxon>Rodentia</taxon>
        <taxon>Myomorpha</taxon>
        <taxon>Muroidea</taxon>
        <taxon>Muridae</taxon>
        <taxon>Murinae</taxon>
        <taxon>Mus</taxon>
        <taxon>Mus</taxon>
    </lineage>
</organism>
<comment type="function">
    <text evidence="1">Plays an important role in control of proteasome function. Inhibits the hydrolysis of protein and peptide substrates by the 20S proteasome. Also inhibits the activation of the proteasome by the proteasome regulatory proteins PA700 and PA28 (By similarity).</text>
</comment>
<comment type="subunit">
    <text evidence="1">Monomer and homodimer. Interacts with FBXO7 (By similarity).</text>
</comment>
<comment type="subcellular location">
    <subcellularLocation>
        <location evidence="1">Cytoplasm</location>
    </subcellularLocation>
    <subcellularLocation>
        <location evidence="1">Endoplasmic reticulum</location>
    </subcellularLocation>
</comment>
<comment type="similarity">
    <text evidence="4">Belongs to the proteasome inhibitor PI31 family.</text>
</comment>
<evidence type="ECO:0000250" key="1"/>
<evidence type="ECO:0000250" key="2">
    <source>
        <dbReference type="UniProtKB" id="Q92530"/>
    </source>
</evidence>
<evidence type="ECO:0000256" key="3">
    <source>
        <dbReference type="SAM" id="MobiDB-lite"/>
    </source>
</evidence>
<evidence type="ECO:0000305" key="4"/>
<evidence type="ECO:0007744" key="5">
    <source>
    </source>
</evidence>
<evidence type="ECO:0007744" key="6">
    <source>
    </source>
</evidence>
<sequence>MAGLEVLFASAAPSMSCPQDALVCFLHWEVVTNGYYALGTGDQPGPSDKKSELLPAKWNSNKELYALRYESKDGARKLLLKAVSVENGMIINVLELGTQQVADLTLNLDDYIDAEDLSDFHRTYKNSEELRSQIRSGIITPIHEQWEKARANSPPREFPPATAREVDPLQISSHRPHTSRQPAWRDPLSPFAVGGDDLDPFGCQRGGMIVDPLRSGFPRVLIDPSSGLPNRLPPGAVPPGARFDPFGPIGTSPSGPNPDHLPPPGYDDMYL</sequence>